<comment type="function">
    <text evidence="2 4">Non-selective voltage-gated ion channel that mediates the transport of anions and cations through the mitochondrion outer membrane and plasma membrane. The channel at the outer mitochondrial membrane allows diffusion of small hydrophilic molecules; in the plasma membrane it is involved in cell volume regulation and apoptosis. It adopts an open conformation at low or zero membrane potential and a closed conformation at potentials above 30-40 mV. The open state has a weak anion selectivity whereas the closed state is cation-selective. Binds various signaling molecules, including the sphingolipid ceramide, the phospholipid phosphatidylcholine, and the sterols cholesterol and oxysterol. In depolarized mitochondria, acts downstream of PRKN and PINK1 to promote mitophagy or prevent apoptosis; polyubiquitination by PRKN promotes mitophagy, while monoubiquitination by PRKN decreases mitochondrial calcium influx which ultimately inhibits apoptosis. May participate in the formation of the permeability transition pore complex (PTPC) responsible for the release of mitochondrial products that triggers apoptosis. May mediate ATP export from cells (By similarity). Part of a complex composed of HSPA9, ITPR1 and VDAC1 that regulates mitochondrial calcium-dependent apoptosis by facilitating calcium transport from the ER lumen to the mitochondria intermembrane space thus providing calcium for the downstream calcium channel MCU that directly releases it into mitochondria matrix (By similarity). Mediates cytochrome c efflux (By similarity).</text>
</comment>
<comment type="function">
    <text evidence="2">Catalyzes the scrambling of phospholipids across the outer mitochondrial membrane; the mechanism is unrelated to channel activity and is capable of translocating both anionic and zwitterionic phospholipids.</text>
</comment>
<comment type="catalytic activity">
    <reaction evidence="5">
        <text>chloride(in) = chloride(out)</text>
        <dbReference type="Rhea" id="RHEA:29823"/>
        <dbReference type="ChEBI" id="CHEBI:17996"/>
    </reaction>
</comment>
<comment type="catalytic activity">
    <reaction evidence="2">
        <text>K(+)(in) = K(+)(out)</text>
        <dbReference type="Rhea" id="RHEA:29463"/>
        <dbReference type="ChEBI" id="CHEBI:29103"/>
    </reaction>
</comment>
<comment type="catalytic activity">
    <reaction evidence="2">
        <text>ATP(in) = ATP(out)</text>
        <dbReference type="Rhea" id="RHEA:75687"/>
        <dbReference type="ChEBI" id="CHEBI:30616"/>
    </reaction>
</comment>
<comment type="catalytic activity">
    <reaction evidence="5">
        <text>Ca(2+)(in) = Ca(2+)(out)</text>
        <dbReference type="Rhea" id="RHEA:29671"/>
        <dbReference type="ChEBI" id="CHEBI:29108"/>
    </reaction>
</comment>
<comment type="catalytic activity">
    <reaction evidence="5">
        <text>Na(+)(in) = Na(+)(out)</text>
        <dbReference type="Rhea" id="RHEA:34963"/>
        <dbReference type="ChEBI" id="CHEBI:29101"/>
    </reaction>
</comment>
<comment type="catalytic activity">
    <reaction evidence="5">
        <text>Mg(2+)(in) = Mg(2+)(out)</text>
        <dbReference type="Rhea" id="RHEA:29827"/>
        <dbReference type="ChEBI" id="CHEBI:18420"/>
    </reaction>
</comment>
<comment type="catalytic activity">
    <reaction evidence="1">
        <text>L-glutamate(out) = L-glutamate(in)</text>
        <dbReference type="Rhea" id="RHEA:66336"/>
        <dbReference type="ChEBI" id="CHEBI:29985"/>
    </reaction>
</comment>
<comment type="catalytic activity">
    <reaction evidence="1">
        <text>dopamine(out) = dopamine(in)</text>
        <dbReference type="Rhea" id="RHEA:73863"/>
        <dbReference type="ChEBI" id="CHEBI:59905"/>
    </reaction>
</comment>
<comment type="catalytic activity">
    <reaction evidence="1">
        <text>acetylcholine(in) = acetylcholine(out)</text>
        <dbReference type="Rhea" id="RHEA:74663"/>
        <dbReference type="ChEBI" id="CHEBI:15355"/>
    </reaction>
</comment>
<comment type="catalytic activity">
    <reaction evidence="2">
        <text>Fe(III)-[cytochrome c](out) = Fe(III)-[cytochrome c](in)</text>
        <dbReference type="Rhea" id="RHEA:79311"/>
        <dbReference type="Rhea" id="RHEA-COMP:14399"/>
        <dbReference type="ChEBI" id="CHEBI:29034"/>
    </reaction>
</comment>
<comment type="catalytic activity">
    <reaction evidence="2">
        <text>a 1,2-diacyl-sn-glycero-3-phosphocholine(in) = a 1,2-diacyl-sn-glycero-3-phosphocholine(out)</text>
        <dbReference type="Rhea" id="RHEA:38571"/>
        <dbReference type="ChEBI" id="CHEBI:57643"/>
    </reaction>
</comment>
<comment type="catalytic activity">
    <reaction evidence="2">
        <text>a 1,2-diacyl-sn-glycero-3-phospho-L-serine(in) = a 1,2-diacyl-sn-glycero-3-phospho-L-serine(out)</text>
        <dbReference type="Rhea" id="RHEA:38663"/>
        <dbReference type="ChEBI" id="CHEBI:57262"/>
    </reaction>
</comment>
<comment type="activity regulation">
    <text evidence="2">Inhibited by nitric oxide.</text>
</comment>
<comment type="subunit">
    <text evidence="2 5">Homodimer and homotrimer; in response to cyclic AMP or calcium; oligomerization is required for scramblase activity. Component of the mitochondrial permeability transition pore complex (mPTPC), at least composed of SPG7, VDAC1 and PPIF. Interacts with SPG7, NIPSNAP2 and SLC25A30. Interacts with hexokinases including HK1. The HK1-VDAC1 complex interacts with ATF2. Interacts with BCL2L1. Interacts with BAK1. Interacts with RTL10/BOP (via BH3 domain). Interacts with amyloid-beta and APP; induces VDAC1 dephosphorylation. Interacts with TMEM41B. Interacts with BCAP31 (By similarity). Interacts with HSPA9; this interaction couples ITPR1 to VDAC1 (By similarity).</text>
</comment>
<comment type="subcellular location">
    <subcellularLocation>
        <location evidence="2">Mitochondrion outer membrane</location>
        <topology evidence="2">Multi-pass membrane protein</topology>
    </subcellularLocation>
    <subcellularLocation>
        <location evidence="2">Cell membrane</location>
        <topology evidence="2">Multi-pass membrane protein</topology>
    </subcellularLocation>
    <subcellularLocation>
        <location evidence="2">Membrane raft</location>
        <topology evidence="2">Multi-pass membrane protein</topology>
    </subcellularLocation>
    <text evidence="5">Found in a complex with HSPA9 and VDAC1 at the endoplasmic reticulum-mitochondria contact sites.</text>
</comment>
<comment type="tissue specificity">
    <text>Predominantly in brain astrocytes.</text>
</comment>
<comment type="domain">
    <text evidence="2">Consists mainly of a membrane-spanning beta-barrel formed by 19 beta-strands. The helical N-terminus folds back into the pore opening and plays a role in voltage-gated channel activity.</text>
</comment>
<comment type="PTM">
    <text evidence="2">Phosphorylation at Ser-193 by NEK1 promotes the closed conformational state preventing excessive mitochondrial membrane permeability and subsequent apoptotic cell death after injury. Phosphorylation by the AKT-GSK3B axis stabilizes the protein probably by preventing ubiquitin-mediated proteasomal degradation.</text>
</comment>
<comment type="PTM">
    <text evidence="2">Ubiquitinated. Undergoes monoubiquitination and polyubiquitination by PRKN; monoubiquitination at Lys-274 inhibits apoptosis, whereas polyubiquitination leads to its degradation and promotes mitophagy. Deubiquitinated by USP30.</text>
</comment>
<comment type="miscellaneous">
    <text>Dicyclohexylcarbodiimide (DCCD) binding on Glu-73 inhibits hexokinase binding in vitro.</text>
</comment>
<comment type="similarity">
    <text evidence="7">Belongs to the eukaryotic mitochondrial porin family.</text>
</comment>
<evidence type="ECO:0000250" key="1">
    <source>
        <dbReference type="UniProtKB" id="A0A6P7EFR0"/>
    </source>
</evidence>
<evidence type="ECO:0000250" key="2">
    <source>
        <dbReference type="UniProtKB" id="P21796"/>
    </source>
</evidence>
<evidence type="ECO:0000250" key="3">
    <source>
        <dbReference type="UniProtKB" id="P45880"/>
    </source>
</evidence>
<evidence type="ECO:0000250" key="4">
    <source>
        <dbReference type="UniProtKB" id="Q60932"/>
    </source>
</evidence>
<evidence type="ECO:0000250" key="5">
    <source>
        <dbReference type="UniProtKB" id="Q9Z2L0"/>
    </source>
</evidence>
<evidence type="ECO:0000303" key="6">
    <source>
    </source>
</evidence>
<evidence type="ECO:0000305" key="7"/>
<protein>
    <recommendedName>
        <fullName evidence="2">Non-selective voltage-gated ion channel VDAC1</fullName>
    </recommendedName>
    <alternativeName>
        <fullName>Brain-derived voltage-dependent anion channel 1</fullName>
        <shortName>BR1-VDAC</shortName>
    </alternativeName>
    <alternativeName>
        <fullName>Plasmalemmal porin</fullName>
    </alternativeName>
    <alternativeName>
        <fullName>Voltage-dependent anion-selective channel protein 1</fullName>
        <shortName>VDAC-1</shortName>
    </alternativeName>
</protein>
<organism>
    <name type="scientific">Bos taurus</name>
    <name type="common">Bovine</name>
    <dbReference type="NCBI Taxonomy" id="9913"/>
    <lineage>
        <taxon>Eukaryota</taxon>
        <taxon>Metazoa</taxon>
        <taxon>Chordata</taxon>
        <taxon>Craniata</taxon>
        <taxon>Vertebrata</taxon>
        <taxon>Euteleostomi</taxon>
        <taxon>Mammalia</taxon>
        <taxon>Eutheria</taxon>
        <taxon>Laurasiatheria</taxon>
        <taxon>Artiodactyla</taxon>
        <taxon>Ruminantia</taxon>
        <taxon>Pecora</taxon>
        <taxon>Bovidae</taxon>
        <taxon>Bovinae</taxon>
        <taxon>Bos</taxon>
    </lineage>
</organism>
<sequence length="283" mass="30741">MAVPPTYADLGKSARDVFTKGYGFGLIKLDLKTKSENGLEFTSSGSANTETTKVTGSLETKYRWTEYGLTFTEKWNTDNTLGTEITVEDQLARGLKLTFDSSFSPNTGKKNAKIKTGYKREHINLGCDVDFDIAGPSIRGALVLGYEGWLAGYQMNFETAKSRVTQSNFAVGYKTDEFQLHTNVNDGTEFGGSIYQKVNKKLETAVNLAWTAGNSNTRFGIAAKYQIDPDACFSAKVNNSSLIGLGYTQTLKPGIKLTLSALLDGKNVNAGGHKLGLGLEFQA</sequence>
<gene>
    <name evidence="2" type="primary">VDAC1</name>
</gene>
<dbReference type="EMBL" id="X75068">
    <property type="protein sequence ID" value="CAA52962.1"/>
    <property type="molecule type" value="mRNA"/>
</dbReference>
<dbReference type="EMBL" id="AF268464">
    <property type="protein sequence ID" value="AAF80101.1"/>
    <property type="molecule type" value="mRNA"/>
</dbReference>
<dbReference type="EMBL" id="BC102113">
    <property type="protein sequence ID" value="AAI02114.1"/>
    <property type="molecule type" value="mRNA"/>
</dbReference>
<dbReference type="PIR" id="A36875">
    <property type="entry name" value="A36875"/>
</dbReference>
<dbReference type="RefSeq" id="NP_776910.2">
    <property type="nucleotide sequence ID" value="NM_174485.4"/>
</dbReference>
<dbReference type="RefSeq" id="XP_005209392.1">
    <property type="nucleotide sequence ID" value="XM_005209335.1"/>
</dbReference>
<dbReference type="RefSeq" id="XP_005209393.1">
    <property type="nucleotide sequence ID" value="XM_005209336.5"/>
</dbReference>
<dbReference type="RefSeq" id="XP_005209394.1">
    <property type="nucleotide sequence ID" value="XM_005209337.1"/>
</dbReference>
<dbReference type="RefSeq" id="XP_024849612.1">
    <property type="nucleotide sequence ID" value="XM_024993844.1"/>
</dbReference>
<dbReference type="BMRB" id="P45879"/>
<dbReference type="SMR" id="P45879"/>
<dbReference type="FunCoup" id="P45879">
    <property type="interactions" value="2651"/>
</dbReference>
<dbReference type="STRING" id="9913.ENSBTAP00000072708"/>
<dbReference type="TCDB" id="1.B.8.1.3">
    <property type="family name" value="the mitochondrial and plastid porin (mpp) family"/>
</dbReference>
<dbReference type="PaxDb" id="9913-ENSBTAP00000049262"/>
<dbReference type="PeptideAtlas" id="P45879"/>
<dbReference type="Ensembl" id="ENSBTAT00000017430.5">
    <property type="protein sequence ID" value="ENSBTAP00000017430.4"/>
    <property type="gene ID" value="ENSBTAG00000013113.7"/>
</dbReference>
<dbReference type="GeneID" id="282119"/>
<dbReference type="KEGG" id="bta:282119"/>
<dbReference type="CTD" id="7416"/>
<dbReference type="VEuPathDB" id="HostDB:ENSBTAG00000013113"/>
<dbReference type="VGNC" id="VGNC:36782">
    <property type="gene designation" value="VDAC1"/>
</dbReference>
<dbReference type="eggNOG" id="KOG3126">
    <property type="taxonomic scope" value="Eukaryota"/>
</dbReference>
<dbReference type="GeneTree" id="ENSGT00950000182869"/>
<dbReference type="HOGENOM" id="CLU_044399_2_0_1"/>
<dbReference type="InParanoid" id="P45879"/>
<dbReference type="OrthoDB" id="7827681at2759"/>
<dbReference type="Reactome" id="R-BTA-5205685">
    <property type="pathway name" value="PINK1-PRKN Mediated Mitophagy"/>
</dbReference>
<dbReference type="Reactome" id="R-BTA-5689880">
    <property type="pathway name" value="Ub-specific processing proteases"/>
</dbReference>
<dbReference type="Reactome" id="R-BTA-70268">
    <property type="pathway name" value="Pyruvate metabolism"/>
</dbReference>
<dbReference type="CD-CODE" id="D7FE2080">
    <property type="entry name" value="Nucleolus"/>
</dbReference>
<dbReference type="Proteomes" id="UP000009136">
    <property type="component" value="Chromosome 7"/>
</dbReference>
<dbReference type="Bgee" id="ENSBTAG00000013113">
    <property type="expression patterns" value="Expressed in corpus luteum and 104 other cell types or tissues"/>
</dbReference>
<dbReference type="GO" id="GO:0016020">
    <property type="term" value="C:membrane"/>
    <property type="evidence" value="ECO:0000250"/>
    <property type="project" value="UniProtKB"/>
</dbReference>
<dbReference type="GO" id="GO:0045121">
    <property type="term" value="C:membrane raft"/>
    <property type="evidence" value="ECO:0007669"/>
    <property type="project" value="UniProtKB-SubCell"/>
</dbReference>
<dbReference type="GO" id="GO:0005741">
    <property type="term" value="C:mitochondrial outer membrane"/>
    <property type="evidence" value="ECO:0000250"/>
    <property type="project" value="UniProtKB"/>
</dbReference>
<dbReference type="GO" id="GO:0005757">
    <property type="term" value="C:mitochondrial permeability transition pore complex"/>
    <property type="evidence" value="ECO:0000250"/>
    <property type="project" value="UniProtKB"/>
</dbReference>
<dbReference type="GO" id="GO:0005739">
    <property type="term" value="C:mitochondrion"/>
    <property type="evidence" value="ECO:0000314"/>
    <property type="project" value="AgBase"/>
</dbReference>
<dbReference type="GO" id="GO:0005886">
    <property type="term" value="C:plasma membrane"/>
    <property type="evidence" value="ECO:0000250"/>
    <property type="project" value="UniProtKB"/>
</dbReference>
<dbReference type="GO" id="GO:0005524">
    <property type="term" value="F:ATP binding"/>
    <property type="evidence" value="ECO:0007669"/>
    <property type="project" value="UniProtKB-KW"/>
</dbReference>
<dbReference type="GO" id="GO:0008142">
    <property type="term" value="F:oxysterol binding"/>
    <property type="evidence" value="ECO:0000250"/>
    <property type="project" value="UniProtKB"/>
</dbReference>
<dbReference type="GO" id="GO:0015288">
    <property type="term" value="F:porin activity"/>
    <property type="evidence" value="ECO:0007669"/>
    <property type="project" value="UniProtKB-KW"/>
</dbReference>
<dbReference type="GO" id="GO:0022832">
    <property type="term" value="F:voltage-gated channel activity"/>
    <property type="evidence" value="ECO:0000250"/>
    <property type="project" value="UniProtKB"/>
</dbReference>
<dbReference type="GO" id="GO:0008308">
    <property type="term" value="F:voltage-gated monoatomic anion channel activity"/>
    <property type="evidence" value="ECO:0000250"/>
    <property type="project" value="UniProtKB"/>
</dbReference>
<dbReference type="GO" id="GO:0005244">
    <property type="term" value="F:voltage-gated monoatomic ion channel activity"/>
    <property type="evidence" value="ECO:0000250"/>
    <property type="project" value="UniProtKB"/>
</dbReference>
<dbReference type="GO" id="GO:0006915">
    <property type="term" value="P:apoptotic process"/>
    <property type="evidence" value="ECO:0000250"/>
    <property type="project" value="UniProtKB"/>
</dbReference>
<dbReference type="GO" id="GO:0036444">
    <property type="term" value="P:calcium import into the mitochondrion"/>
    <property type="evidence" value="ECO:0000250"/>
    <property type="project" value="UniProtKB"/>
</dbReference>
<dbReference type="GO" id="GO:0006869">
    <property type="term" value="P:lipid transport"/>
    <property type="evidence" value="ECO:0007669"/>
    <property type="project" value="UniProtKB-KW"/>
</dbReference>
<dbReference type="GO" id="GO:0006820">
    <property type="term" value="P:monoatomic anion transport"/>
    <property type="evidence" value="ECO:0000250"/>
    <property type="project" value="UniProtKB"/>
</dbReference>
<dbReference type="CDD" id="cd07306">
    <property type="entry name" value="Porin3_VDAC"/>
    <property type="match status" value="1"/>
</dbReference>
<dbReference type="FunFam" id="2.40.160.10:FF:000001">
    <property type="entry name" value="Voltage-dependent anion-selective channel protein 2"/>
    <property type="match status" value="1"/>
</dbReference>
<dbReference type="Gene3D" id="2.40.160.10">
    <property type="entry name" value="Porin"/>
    <property type="match status" value="1"/>
</dbReference>
<dbReference type="InterPro" id="IPR023614">
    <property type="entry name" value="Porin_dom_sf"/>
</dbReference>
<dbReference type="InterPro" id="IPR001925">
    <property type="entry name" value="Porin_Euk"/>
</dbReference>
<dbReference type="InterPro" id="IPR027246">
    <property type="entry name" value="Porin_Euk/Tom40"/>
</dbReference>
<dbReference type="PANTHER" id="PTHR11743">
    <property type="entry name" value="VOLTAGE-DEPENDENT ANION-SELECTIVE CHANNEL"/>
    <property type="match status" value="1"/>
</dbReference>
<dbReference type="PANTHER" id="PTHR11743:SF13">
    <property type="entry name" value="VOLTAGE-DEPENDENT ANION-SELECTIVE CHANNEL PROTEIN 1"/>
    <property type="match status" value="1"/>
</dbReference>
<dbReference type="Pfam" id="PF01459">
    <property type="entry name" value="Porin_3"/>
    <property type="match status" value="1"/>
</dbReference>
<dbReference type="PRINTS" id="PR00185">
    <property type="entry name" value="EUKARYTPORIN"/>
</dbReference>
<dbReference type="PROSITE" id="PS00558">
    <property type="entry name" value="EUKARYOTIC_PORIN"/>
    <property type="match status" value="1"/>
</dbReference>
<name>VDAC1_BOVIN</name>
<reference key="1">
    <citation type="journal article" date="1994" name="Proc. Natl. Acad. Sci. U.S.A.">
        <title>Cloning and in situ localization of a brain-derived porin that constitutes a large-conductance anion channel in astrocytic plasma membranes.</title>
        <authorList>
            <person name="Dermietzel R."/>
            <person name="Hwang T.-K."/>
            <person name="Buettner R."/>
            <person name="Hofer A."/>
            <person name="Dotzler E."/>
            <person name="Kremer M."/>
            <person name="Deutzmann R."/>
            <person name="Thinnes F.P."/>
            <person name="Fishman G.I."/>
            <person name="Spray D.C."/>
            <person name="Siemen D."/>
        </authorList>
    </citation>
    <scope>NUCLEOTIDE SEQUENCE [MRNA]</scope>
    <scope>PARTIAL PROTEIN SEQUENCE</scope>
    <source>
        <tissue>Brain</tissue>
    </source>
</reference>
<reference key="2">
    <citation type="submission" date="2000-05" db="EMBL/GenBank/DDBJ databases">
        <title>Ion channels in the lens.</title>
        <authorList>
            <person name="Rae J.L."/>
        </authorList>
    </citation>
    <scope>NUCLEOTIDE SEQUENCE [MRNA]</scope>
    <source>
        <tissue>Lens</tissue>
    </source>
</reference>
<reference key="3">
    <citation type="submission" date="2005-08" db="EMBL/GenBank/DDBJ databases">
        <authorList>
            <consortium name="NIH - Mammalian Gene Collection (MGC) project"/>
        </authorList>
    </citation>
    <scope>NUCLEOTIDE SEQUENCE [LARGE SCALE MRNA]</scope>
    <source>
        <strain>Crossbred X Angus</strain>
        <tissue>Ileum</tissue>
    </source>
</reference>
<reference key="4">
    <citation type="journal article" date="1999" name="Anal. Biochem.">
        <title>Purification procedure and monoclonal antibodies: two instruments for research on vertebrate porins.</title>
        <authorList>
            <person name="Reymann S."/>
            <person name="Kiafard Z."/>
            <person name="Rohm B."/>
            <person name="Strutz N."/>
            <person name="Hesse D."/>
            <person name="Kratzin H.D."/>
            <person name="Zimmermann B."/>
            <person name="Thinnes F.P."/>
            <person name="Hilschmann N."/>
        </authorList>
    </citation>
    <scope>PROTEIN SEQUENCE OF 156-165</scope>
    <source>
        <tissue evidence="6">Skeletal muscle</tissue>
    </source>
</reference>
<reference key="5">
    <citation type="journal article" date="1993" name="J. Biol. Chem.">
        <title>Location of the dicyclohexylcarbodiimide-reactive glutamate residue in the bovine heart mitochondrial porin.</title>
        <authorList>
            <person name="De Pinto V."/>
            <person name="Al Jamal J.A."/>
            <person name="Palmieri F."/>
        </authorList>
    </citation>
    <scope>INHIBITION BY CHEMICAL MODIFICATION</scope>
</reference>
<keyword id="KW-0007">Acetylation</keyword>
<keyword id="KW-0053">Apoptosis</keyword>
<keyword id="KW-0067">ATP-binding</keyword>
<keyword id="KW-1003">Cell membrane</keyword>
<keyword id="KW-0903">Direct protein sequencing</keyword>
<keyword id="KW-0406">Ion transport</keyword>
<keyword id="KW-1017">Isopeptide bond</keyword>
<keyword id="KW-0445">Lipid transport</keyword>
<keyword id="KW-0446">Lipid-binding</keyword>
<keyword id="KW-0472">Membrane</keyword>
<keyword id="KW-0496">Mitochondrion</keyword>
<keyword id="KW-1000">Mitochondrion outer membrane</keyword>
<keyword id="KW-0520">NAD</keyword>
<keyword id="KW-0547">Nucleotide-binding</keyword>
<keyword id="KW-0597">Phosphoprotein</keyword>
<keyword id="KW-0626">Porin</keyword>
<keyword id="KW-1185">Reference proteome</keyword>
<keyword id="KW-0812">Transmembrane</keyword>
<keyword id="KW-1134">Transmembrane beta strand</keyword>
<keyword id="KW-0813">Transport</keyword>
<keyword id="KW-0832">Ubl conjugation</keyword>
<accession>P45879</accession>
<accession>Q3ZCK0</accession>
<accession>Q71SW7</accession>
<proteinExistence type="evidence at protein level"/>
<feature type="initiator methionine" description="Removed" evidence="2">
    <location>
        <position position="1"/>
    </location>
</feature>
<feature type="chain" id="PRO_0000050498" description="Non-selective voltage-gated ion channel VDAC1">
    <location>
        <begin position="2"/>
        <end position="283"/>
    </location>
</feature>
<feature type="transmembrane region" description="Beta stranded" evidence="2">
    <location>
        <begin position="26"/>
        <end position="35"/>
    </location>
</feature>
<feature type="transmembrane region" description="Beta stranded" evidence="2">
    <location>
        <begin position="39"/>
        <end position="47"/>
    </location>
</feature>
<feature type="transmembrane region" description="Beta stranded" evidence="2">
    <location>
        <begin position="54"/>
        <end position="64"/>
    </location>
</feature>
<feature type="transmembrane region" description="Beta stranded" evidence="2">
    <location>
        <begin position="69"/>
        <end position="76"/>
    </location>
</feature>
<feature type="transmembrane region" description="Beta stranded" evidence="2">
    <location>
        <begin position="80"/>
        <end position="89"/>
    </location>
</feature>
<feature type="transmembrane region" description="Beta stranded" evidence="2">
    <location>
        <begin position="95"/>
        <end position="104"/>
    </location>
</feature>
<feature type="transmembrane region" description="Beta stranded" evidence="2">
    <location>
        <begin position="111"/>
        <end position="120"/>
    </location>
</feature>
<feature type="transmembrane region" description="Beta stranded" evidence="2">
    <location>
        <begin position="123"/>
        <end position="130"/>
    </location>
</feature>
<feature type="transmembrane region" description="Beta stranded" evidence="2">
    <location>
        <begin position="137"/>
        <end position="145"/>
    </location>
</feature>
<feature type="transmembrane region" description="Beta stranded" evidence="2">
    <location>
        <begin position="150"/>
        <end position="158"/>
    </location>
</feature>
<feature type="transmembrane region" description="Beta stranded" evidence="2">
    <location>
        <begin position="163"/>
        <end position="175"/>
    </location>
</feature>
<feature type="transmembrane region" description="Beta stranded" evidence="2">
    <location>
        <begin position="178"/>
        <end position="185"/>
    </location>
</feature>
<feature type="transmembrane region" description="Beta stranded" evidence="2">
    <location>
        <begin position="189"/>
        <end position="198"/>
    </location>
</feature>
<feature type="transmembrane region" description="Beta stranded" evidence="2">
    <location>
        <begin position="202"/>
        <end position="211"/>
    </location>
</feature>
<feature type="transmembrane region" description="Beta stranded" evidence="2">
    <location>
        <begin position="218"/>
        <end position="227"/>
    </location>
</feature>
<feature type="transmembrane region" description="Beta stranded" evidence="2">
    <location>
        <begin position="231"/>
        <end position="238"/>
    </location>
</feature>
<feature type="transmembrane region" description="Beta stranded" evidence="2">
    <location>
        <begin position="242"/>
        <end position="251"/>
    </location>
</feature>
<feature type="transmembrane region" description="Beta stranded" evidence="2">
    <location>
        <begin position="254"/>
        <end position="263"/>
    </location>
</feature>
<feature type="transmembrane region" description="Beta stranded" evidence="2">
    <location>
        <begin position="273"/>
        <end position="282"/>
    </location>
</feature>
<feature type="binding site" evidence="4">
    <location>
        <position position="12"/>
    </location>
    <ligand>
        <name>ATP</name>
        <dbReference type="ChEBI" id="CHEBI:30616"/>
    </ligand>
</feature>
<feature type="binding site" evidence="4">
    <location>
        <position position="20"/>
    </location>
    <ligand>
        <name>ATP</name>
        <dbReference type="ChEBI" id="CHEBI:30616"/>
    </ligand>
</feature>
<feature type="binding site" evidence="2">
    <location>
        <begin position="242"/>
        <end position="244"/>
    </location>
    <ligand>
        <name>NAD(+)</name>
        <dbReference type="ChEBI" id="CHEBI:57540"/>
    </ligand>
</feature>
<feature type="binding site" evidence="2">
    <location>
        <begin position="260"/>
        <end position="264"/>
    </location>
    <ligand>
        <name>NAD(+)</name>
        <dbReference type="ChEBI" id="CHEBI:57540"/>
    </ligand>
</feature>
<feature type="site" description="Involved in ceramide and phosphatidylcholine binding. Critical for channel structural stability and gating" evidence="2">
    <location>
        <position position="73"/>
    </location>
</feature>
<feature type="modified residue" description="N-acetylalanine" evidence="2">
    <location>
        <position position="2"/>
    </location>
</feature>
<feature type="modified residue" description="Phosphoserine" evidence="5">
    <location>
        <position position="13"/>
    </location>
</feature>
<feature type="modified residue" description="Phosphothreonine" evidence="4">
    <location>
        <position position="19"/>
    </location>
</feature>
<feature type="modified residue" description="N6-acetyllysine; alternate" evidence="2">
    <location>
        <position position="20"/>
    </location>
</feature>
<feature type="modified residue" description="N6-succinyllysine; alternate" evidence="4">
    <location>
        <position position="20"/>
    </location>
</feature>
<feature type="modified residue" description="Phosphotyrosine" evidence="4">
    <location>
        <position position="67"/>
    </location>
</feature>
<feature type="modified residue" description="Phosphothreonine" evidence="2">
    <location>
        <position position="107"/>
    </location>
</feature>
<feature type="modified residue" description="N6-acetyllysine; alternate" evidence="4">
    <location>
        <position position="109"/>
    </location>
</feature>
<feature type="modified residue" description="Phosphoserine; by NEK1" evidence="2">
    <location>
        <position position="193"/>
    </location>
</feature>
<feature type="modified residue" description="Phosphoserine" evidence="2">
    <location>
        <position position="240"/>
    </location>
</feature>
<feature type="modified residue" description="N6-acetyllysine" evidence="4">
    <location>
        <position position="252"/>
    </location>
</feature>
<feature type="modified residue" description="N6-acetyllysine; alternate" evidence="2">
    <location>
        <position position="266"/>
    </location>
</feature>
<feature type="cross-link" description="Glycyl lysine isopeptide (Lys-Gly) (interchain with G-Cter in ubiquitin)" evidence="2">
    <location>
        <position position="12"/>
    </location>
</feature>
<feature type="cross-link" description="Glycyl lysine isopeptide (Lys-Gly) (interchain with G-Cter in ubiquitin); alternate" evidence="3">
    <location>
        <position position="20"/>
    </location>
</feature>
<feature type="cross-link" description="Glycyl lysine isopeptide (Lys-Gly) (interchain with G-Cter in ubiquitin)" evidence="2">
    <location>
        <position position="53"/>
    </location>
</feature>
<feature type="cross-link" description="Glycyl lysine isopeptide (Lys-Gly) (interchain with G-Cter in ubiquitin)" evidence="2">
    <location>
        <position position="61"/>
    </location>
</feature>
<feature type="cross-link" description="Glycyl lysine isopeptide (Lys-Gly) (interchain with G-Cter in ubiquitin); alternate" evidence="2">
    <location>
        <position position="109"/>
    </location>
</feature>
<feature type="cross-link" description="Glycyl lysine isopeptide (Lys-Gly) (interchain with G-Cter in ubiquitin)" evidence="2">
    <location>
        <position position="110"/>
    </location>
</feature>
<feature type="cross-link" description="Glycyl lysine isopeptide (Lys-Gly) (interchain with G-Cter in ubiquitin)" evidence="2">
    <location>
        <position position="161"/>
    </location>
</feature>
<feature type="cross-link" description="Glycyl lysine isopeptide (Lys-Gly) (interchain with G-Cter in ubiquitin); alternate" evidence="2">
    <location>
        <position position="266"/>
    </location>
</feature>
<feature type="cross-link" description="Glycyl lysine isopeptide (Lys-Gly) (interchain with G-Cter in ubiquitin)" evidence="2">
    <location>
        <position position="274"/>
    </location>
</feature>
<feature type="sequence conflict" description="In Ref. 1; AA sequence." evidence="7" ref="1">
    <original>PPT</original>
    <variation>VRP</variation>
    <location>
        <begin position="4"/>
        <end position="6"/>
    </location>
</feature>
<feature type="sequence conflict" description="In Ref. 1; CAA52962." evidence="7" ref="1">
    <original>K</original>
    <variation>R</variation>
    <location>
        <position position="109"/>
    </location>
</feature>
<feature type="sequence conflict" description="In Ref. 3; AAI02114." evidence="7" ref="3">
    <original>G</original>
    <variation>R</variation>
    <location>
        <position position="246"/>
    </location>
</feature>